<dbReference type="EMBL" id="CP000937">
    <property type="protein sequence ID" value="ABZ86329.1"/>
    <property type="molecule type" value="Genomic_DNA"/>
</dbReference>
<dbReference type="SMR" id="B0TY87"/>
<dbReference type="KEGG" id="fph:Fphi_0108"/>
<dbReference type="eggNOG" id="COG0291">
    <property type="taxonomic scope" value="Bacteria"/>
</dbReference>
<dbReference type="HOGENOM" id="CLU_169643_1_1_6"/>
<dbReference type="GO" id="GO:0022625">
    <property type="term" value="C:cytosolic large ribosomal subunit"/>
    <property type="evidence" value="ECO:0007669"/>
    <property type="project" value="TreeGrafter"/>
</dbReference>
<dbReference type="GO" id="GO:0003735">
    <property type="term" value="F:structural constituent of ribosome"/>
    <property type="evidence" value="ECO:0007669"/>
    <property type="project" value="InterPro"/>
</dbReference>
<dbReference type="GO" id="GO:0006412">
    <property type="term" value="P:translation"/>
    <property type="evidence" value="ECO:0007669"/>
    <property type="project" value="UniProtKB-UniRule"/>
</dbReference>
<dbReference type="FunFam" id="4.10.410.60:FF:000001">
    <property type="entry name" value="50S ribosomal protein L35"/>
    <property type="match status" value="1"/>
</dbReference>
<dbReference type="Gene3D" id="4.10.410.60">
    <property type="match status" value="1"/>
</dbReference>
<dbReference type="HAMAP" id="MF_00514">
    <property type="entry name" value="Ribosomal_bL35"/>
    <property type="match status" value="1"/>
</dbReference>
<dbReference type="InterPro" id="IPR001706">
    <property type="entry name" value="Ribosomal_bL35"/>
</dbReference>
<dbReference type="InterPro" id="IPR021137">
    <property type="entry name" value="Ribosomal_bL35-like"/>
</dbReference>
<dbReference type="InterPro" id="IPR018265">
    <property type="entry name" value="Ribosomal_bL35_CS"/>
</dbReference>
<dbReference type="InterPro" id="IPR037229">
    <property type="entry name" value="Ribosomal_bL35_sf"/>
</dbReference>
<dbReference type="NCBIfam" id="TIGR00001">
    <property type="entry name" value="rpmI_bact"/>
    <property type="match status" value="1"/>
</dbReference>
<dbReference type="PANTHER" id="PTHR33343">
    <property type="entry name" value="54S RIBOSOMAL PROTEIN BL35M"/>
    <property type="match status" value="1"/>
</dbReference>
<dbReference type="PANTHER" id="PTHR33343:SF1">
    <property type="entry name" value="LARGE RIBOSOMAL SUBUNIT PROTEIN BL35M"/>
    <property type="match status" value="1"/>
</dbReference>
<dbReference type="Pfam" id="PF01632">
    <property type="entry name" value="Ribosomal_L35p"/>
    <property type="match status" value="1"/>
</dbReference>
<dbReference type="PRINTS" id="PR00064">
    <property type="entry name" value="RIBOSOMALL35"/>
</dbReference>
<dbReference type="SUPFAM" id="SSF143034">
    <property type="entry name" value="L35p-like"/>
    <property type="match status" value="1"/>
</dbReference>
<dbReference type="PROSITE" id="PS00936">
    <property type="entry name" value="RIBOSOMAL_L35"/>
    <property type="match status" value="1"/>
</dbReference>
<accession>B0TY87</accession>
<comment type="similarity">
    <text evidence="1">Belongs to the bacterial ribosomal protein bL35 family.</text>
</comment>
<protein>
    <recommendedName>
        <fullName evidence="1">Large ribosomal subunit protein bL35</fullName>
    </recommendedName>
    <alternativeName>
        <fullName evidence="3">50S ribosomal protein L35</fullName>
    </alternativeName>
</protein>
<proteinExistence type="inferred from homology"/>
<organism>
    <name type="scientific">Francisella philomiragia subsp. philomiragia (strain ATCC 25017 / CCUG 19701 / FSC 153 / O#319-036)</name>
    <dbReference type="NCBI Taxonomy" id="484022"/>
    <lineage>
        <taxon>Bacteria</taxon>
        <taxon>Pseudomonadati</taxon>
        <taxon>Pseudomonadota</taxon>
        <taxon>Gammaproteobacteria</taxon>
        <taxon>Thiotrichales</taxon>
        <taxon>Francisellaceae</taxon>
        <taxon>Francisella</taxon>
    </lineage>
</organism>
<sequence length="65" mass="7340">MPKLKTKSGAAKRFKKTGKGGFKHRCANRAHINTKMTTKRKRHLRGMNQVAKVDTASLVQQMPYA</sequence>
<name>RL35_FRAP2</name>
<keyword id="KW-0687">Ribonucleoprotein</keyword>
<keyword id="KW-0689">Ribosomal protein</keyword>
<gene>
    <name evidence="1" type="primary">rpmI</name>
    <name type="ordered locus">Fphi_0108</name>
</gene>
<reference key="1">
    <citation type="submission" date="2007-12" db="EMBL/GenBank/DDBJ databases">
        <title>Complete sequence of chromosome of Francisella philomiragia subsp. philomiragia ATCC 25017.</title>
        <authorList>
            <consortium name="US DOE Joint Genome Institute"/>
            <person name="Copeland A."/>
            <person name="Lucas S."/>
            <person name="Lapidus A."/>
            <person name="Barry K."/>
            <person name="Detter J.C."/>
            <person name="Glavina del Rio T."/>
            <person name="Hammon N."/>
            <person name="Israni S."/>
            <person name="Dalin E."/>
            <person name="Tice H."/>
            <person name="Pitluck S."/>
            <person name="Chain P."/>
            <person name="Malfatti S."/>
            <person name="Shin M."/>
            <person name="Vergez L."/>
            <person name="Schmutz J."/>
            <person name="Larimer F."/>
            <person name="Land M."/>
            <person name="Hauser L."/>
            <person name="Richardson P."/>
        </authorList>
    </citation>
    <scope>NUCLEOTIDE SEQUENCE [LARGE SCALE GENOMIC DNA]</scope>
    <source>
        <strain>ATCC 25017 / CCUG 19701 / FSC 153 / O#319-036</strain>
    </source>
</reference>
<feature type="chain" id="PRO_1000081610" description="Large ribosomal subunit protein bL35">
    <location>
        <begin position="1"/>
        <end position="65"/>
    </location>
</feature>
<feature type="region of interest" description="Disordered" evidence="2">
    <location>
        <begin position="1"/>
        <end position="22"/>
    </location>
</feature>
<evidence type="ECO:0000255" key="1">
    <source>
        <dbReference type="HAMAP-Rule" id="MF_00514"/>
    </source>
</evidence>
<evidence type="ECO:0000256" key="2">
    <source>
        <dbReference type="SAM" id="MobiDB-lite"/>
    </source>
</evidence>
<evidence type="ECO:0000305" key="3"/>